<feature type="chain" id="PRO_0000460136" description="Phenylalanine dehydrogenase">
    <location>
        <begin position="1"/>
        <end position="364"/>
    </location>
</feature>
<feature type="active site" description="Proton donor/acceptor" evidence="1">
    <location>
        <position position="98"/>
    </location>
</feature>
<feature type="binding site" evidence="1">
    <location>
        <position position="62"/>
    </location>
    <ligand>
        <name>NAD(+)</name>
        <dbReference type="ChEBI" id="CHEBI:57540"/>
    </ligand>
</feature>
<feature type="binding site" evidence="1">
    <location>
        <position position="86"/>
    </location>
    <ligand>
        <name>L-phenylalanine</name>
        <dbReference type="ChEBI" id="CHEBI:58095"/>
    </ligand>
</feature>
<feature type="binding site" evidence="1">
    <location>
        <position position="133"/>
    </location>
    <ligand>
        <name>NAD(+)</name>
        <dbReference type="ChEBI" id="CHEBI:57540"/>
    </ligand>
</feature>
<feature type="binding site" evidence="1">
    <location>
        <position position="164"/>
    </location>
    <ligand>
        <name>NAD(+)</name>
        <dbReference type="ChEBI" id="CHEBI:57540"/>
    </ligand>
</feature>
<feature type="binding site" evidence="1">
    <location>
        <position position="168"/>
    </location>
    <ligand>
        <name>NAD(+)</name>
        <dbReference type="ChEBI" id="CHEBI:57540"/>
    </ligand>
</feature>
<feature type="binding site" evidence="1">
    <location>
        <begin position="255"/>
        <end position="256"/>
    </location>
    <ligand>
        <name>NAD(+)</name>
        <dbReference type="ChEBI" id="CHEBI:57540"/>
    </ligand>
</feature>
<feature type="binding site" evidence="1">
    <location>
        <begin position="276"/>
        <end position="278"/>
    </location>
    <ligand>
        <name>NAD(+)</name>
        <dbReference type="ChEBI" id="CHEBI:57540"/>
    </ligand>
</feature>
<feature type="binding site" evidence="1">
    <location>
        <position position="278"/>
    </location>
    <ligand>
        <name>L-phenylalanine</name>
        <dbReference type="ChEBI" id="CHEBI:58095"/>
    </ligand>
</feature>
<gene>
    <name evidence="6" type="ordered locus">RHA1_ro01628</name>
</gene>
<organism evidence="7">
    <name type="scientific">Rhodococcus jostii (strain RHA1)</name>
    <dbReference type="NCBI Taxonomy" id="101510"/>
    <lineage>
        <taxon>Bacteria</taxon>
        <taxon>Bacillati</taxon>
        <taxon>Actinomycetota</taxon>
        <taxon>Actinomycetes</taxon>
        <taxon>Mycobacteriales</taxon>
        <taxon>Nocardiaceae</taxon>
        <taxon>Rhodococcus</taxon>
    </lineage>
</organism>
<accession>Q0SG95</accession>
<comment type="function">
    <text evidence="2">Catalyzes the reversible NAD(+)-dependent oxidative deamination of L-phenylalanine to phenylpyruvate.</text>
</comment>
<comment type="catalytic activity">
    <reaction evidence="5">
        <text>L-phenylalanine + NAD(+) + H2O = 3-phenylpyruvate + NH4(+) + NADH + H(+)</text>
        <dbReference type="Rhea" id="RHEA:21408"/>
        <dbReference type="ChEBI" id="CHEBI:15377"/>
        <dbReference type="ChEBI" id="CHEBI:15378"/>
        <dbReference type="ChEBI" id="CHEBI:18005"/>
        <dbReference type="ChEBI" id="CHEBI:28938"/>
        <dbReference type="ChEBI" id="CHEBI:57540"/>
        <dbReference type="ChEBI" id="CHEBI:57945"/>
        <dbReference type="ChEBI" id="CHEBI:58095"/>
        <dbReference type="EC" id="1.4.1.20"/>
    </reaction>
</comment>
<comment type="pathway">
    <text evidence="1">Amino-acid biosynthesis; L-phenylalanine biosynthesis; L-phenylalanine from phenylpyruvate (PDH route): step 1/1.</text>
</comment>
<comment type="biotechnology">
    <text evidence="2">Has been used to resolve racemic mixtures of D,L-amino acids to yield enantiomerically pure isomers for pharmacological and peptide research uses.</text>
</comment>
<comment type="similarity">
    <text evidence="4">Belongs to the Glu/Leu/Phe/Val dehydrogenases family.</text>
</comment>
<reference evidence="7" key="1">
    <citation type="journal article" date="2006" name="Proc. Natl. Acad. Sci. U.S.A.">
        <title>The complete genome of Rhodococcus sp. RHA1 provides insights into a catabolic powerhouse.</title>
        <authorList>
            <person name="McLeod M.P."/>
            <person name="Warren R.L."/>
            <person name="Hsiao W.W.L."/>
            <person name="Araki N."/>
            <person name="Myhre M."/>
            <person name="Fernandes C."/>
            <person name="Miyazawa D."/>
            <person name="Wong W."/>
            <person name="Lillquist A.L."/>
            <person name="Wang D."/>
            <person name="Dosanjh M."/>
            <person name="Hara H."/>
            <person name="Petrescu A."/>
            <person name="Morin R.D."/>
            <person name="Yang G."/>
            <person name="Stott J.M."/>
            <person name="Schein J.E."/>
            <person name="Shin H."/>
            <person name="Smailus D."/>
            <person name="Siddiqui A.S."/>
            <person name="Marra M.A."/>
            <person name="Jones S.J.M."/>
            <person name="Holt R."/>
            <person name="Brinkman F.S.L."/>
            <person name="Miyauchi K."/>
            <person name="Fukuda M."/>
            <person name="Davies J.E."/>
            <person name="Mohn W.W."/>
            <person name="Eltis L.D."/>
        </authorList>
    </citation>
    <scope>NUCLEOTIDE SEQUENCE [LARGE SCALE GENOMIC DNA]</scope>
    <source>
        <strain evidence="7">RHA1</strain>
    </source>
</reference>
<reference evidence="4" key="2">
    <citation type="journal article" date="2019" name="Biotechnol. Bioeng.">
        <title>Efficient production of S-adenosyl-l-methionine from dl-methionine in metabolic engineered Saccharomyces cerevisiae.</title>
        <authorList>
            <person name="Liu W."/>
            <person name="Tang D."/>
            <person name="Shi R."/>
            <person name="Lian J."/>
            <person name="Huang L."/>
            <person name="Cai J."/>
            <person name="Xu Z."/>
        </authorList>
    </citation>
    <scope>FUNCTION</scope>
    <scope>CATALYTIC ACTIVITY</scope>
    <scope>BIOTECHNOLOGY</scope>
</reference>
<proteinExistence type="evidence at protein level"/>
<name>DHPH_RHOJR</name>
<protein>
    <recommendedName>
        <fullName evidence="3">Phenylalanine dehydrogenase</fullName>
        <shortName evidence="4">PheDH</shortName>
        <ecNumber evidence="5">1.4.1.20</ecNumber>
    </recommendedName>
</protein>
<dbReference type="EC" id="1.4.1.20" evidence="5"/>
<dbReference type="EMBL" id="CP000431">
    <property type="protein sequence ID" value="ABG93441.1"/>
    <property type="molecule type" value="Genomic_DNA"/>
</dbReference>
<dbReference type="RefSeq" id="WP_011594576.1">
    <property type="nucleotide sequence ID" value="NC_008268.1"/>
</dbReference>
<dbReference type="SMR" id="Q0SG95"/>
<dbReference type="KEGG" id="rha:RHA1_ro01628"/>
<dbReference type="PATRIC" id="fig|101510.16.peg.1650"/>
<dbReference type="eggNOG" id="COG0334">
    <property type="taxonomic scope" value="Bacteria"/>
</dbReference>
<dbReference type="HOGENOM" id="CLU_025763_0_0_11"/>
<dbReference type="OrthoDB" id="9803297at2"/>
<dbReference type="UniPathway" id="UPA00121">
    <property type="reaction ID" value="UER00346"/>
</dbReference>
<dbReference type="Proteomes" id="UP000008710">
    <property type="component" value="Chromosome"/>
</dbReference>
<dbReference type="GO" id="GO:0050049">
    <property type="term" value="F:L-leucine dehydrogenase activity"/>
    <property type="evidence" value="ECO:0007669"/>
    <property type="project" value="UniProtKB-EC"/>
</dbReference>
<dbReference type="GO" id="GO:0000166">
    <property type="term" value="F:nucleotide binding"/>
    <property type="evidence" value="ECO:0007669"/>
    <property type="project" value="UniProtKB-KW"/>
</dbReference>
<dbReference type="GO" id="GO:0050175">
    <property type="term" value="F:phenylalanine dehydrogenase activity"/>
    <property type="evidence" value="ECO:0000314"/>
    <property type="project" value="UniProtKB"/>
</dbReference>
<dbReference type="GO" id="GO:0009094">
    <property type="term" value="P:L-phenylalanine biosynthetic process"/>
    <property type="evidence" value="ECO:0007669"/>
    <property type="project" value="UniProtKB-UniPathway"/>
</dbReference>
<dbReference type="CDD" id="cd01075">
    <property type="entry name" value="NAD_bind_Leu_Phe_Val_DH"/>
    <property type="match status" value="1"/>
</dbReference>
<dbReference type="FunFam" id="3.40.50.10860:FF:000010">
    <property type="entry name" value="Leucine dehydrogenase"/>
    <property type="match status" value="1"/>
</dbReference>
<dbReference type="Gene3D" id="3.40.50.10860">
    <property type="entry name" value="Leucine Dehydrogenase, chain A, domain 1"/>
    <property type="match status" value="1"/>
</dbReference>
<dbReference type="Gene3D" id="3.40.50.720">
    <property type="entry name" value="NAD(P)-binding Rossmann-like Domain"/>
    <property type="match status" value="1"/>
</dbReference>
<dbReference type="InterPro" id="IPR046346">
    <property type="entry name" value="Aminoacid_DH-like_N_sf"/>
</dbReference>
<dbReference type="InterPro" id="IPR006095">
    <property type="entry name" value="Glu/Leu/Phe/Val/Trp_DH"/>
</dbReference>
<dbReference type="InterPro" id="IPR006096">
    <property type="entry name" value="Glu/Leu/Phe/Val/Trp_DH_C"/>
</dbReference>
<dbReference type="InterPro" id="IPR006097">
    <property type="entry name" value="Glu/Leu/Phe/Val/Trp_DH_dimer"/>
</dbReference>
<dbReference type="InterPro" id="IPR033524">
    <property type="entry name" value="Glu/Leu/Phe/Val_DH_AS"/>
</dbReference>
<dbReference type="InterPro" id="IPR016211">
    <property type="entry name" value="Glu/Phe/Leu/Val/Trp_DH_bac/arc"/>
</dbReference>
<dbReference type="InterPro" id="IPR036291">
    <property type="entry name" value="NAD(P)-bd_dom_sf"/>
</dbReference>
<dbReference type="PANTHER" id="PTHR42722">
    <property type="entry name" value="LEUCINE DEHYDROGENASE"/>
    <property type="match status" value="1"/>
</dbReference>
<dbReference type="PANTHER" id="PTHR42722:SF1">
    <property type="entry name" value="VALINE DEHYDROGENASE"/>
    <property type="match status" value="1"/>
</dbReference>
<dbReference type="Pfam" id="PF00208">
    <property type="entry name" value="ELFV_dehydrog"/>
    <property type="match status" value="2"/>
</dbReference>
<dbReference type="Pfam" id="PF02812">
    <property type="entry name" value="ELFV_dehydrog_N"/>
    <property type="match status" value="1"/>
</dbReference>
<dbReference type="PIRSF" id="PIRSF000188">
    <property type="entry name" value="Phe_leu_dh"/>
    <property type="match status" value="1"/>
</dbReference>
<dbReference type="PRINTS" id="PR00082">
    <property type="entry name" value="GLFDHDRGNASE"/>
</dbReference>
<dbReference type="SMART" id="SM00839">
    <property type="entry name" value="ELFV_dehydrog"/>
    <property type="match status" value="1"/>
</dbReference>
<dbReference type="SUPFAM" id="SSF53223">
    <property type="entry name" value="Aminoacid dehydrogenase-like, N-terminal domain"/>
    <property type="match status" value="1"/>
</dbReference>
<dbReference type="SUPFAM" id="SSF51735">
    <property type="entry name" value="NAD(P)-binding Rossmann-fold domains"/>
    <property type="match status" value="1"/>
</dbReference>
<dbReference type="PROSITE" id="PS00074">
    <property type="entry name" value="GLFV_DEHYDROGENASE"/>
    <property type="match status" value="1"/>
</dbReference>
<evidence type="ECO:0000250" key="1">
    <source>
        <dbReference type="UniProtKB" id="Q59771"/>
    </source>
</evidence>
<evidence type="ECO:0000269" key="2">
    <source>
    </source>
</evidence>
<evidence type="ECO:0000303" key="3">
    <source>
    </source>
</evidence>
<evidence type="ECO:0000305" key="4"/>
<evidence type="ECO:0000305" key="5">
    <source>
    </source>
</evidence>
<evidence type="ECO:0000312" key="6">
    <source>
        <dbReference type="EMBL" id="ABG93441.1"/>
    </source>
</evidence>
<evidence type="ECO:0000312" key="7">
    <source>
        <dbReference type="Proteomes" id="UP000008710"/>
    </source>
</evidence>
<keyword id="KW-0520">NAD</keyword>
<keyword id="KW-0547">Nucleotide-binding</keyword>
<keyword id="KW-0560">Oxidoreductase</keyword>
<sequence length="364" mass="37420">MTLTAERHDTAQPENAGVFERTDFPTDTAHEQVTFFQDPATGLKAIVAIHDTTLGPALGGTRFYPYADEAAALKDVLRLSRGMTYKSAIAGVDLGGGKAVIIGDPATGKSEALLEAYARFVQTLGGRYITAGDVGTNSDDLDVMGRATDYVVGRNTSAGGSGDSAPMTALGVFQGMRAAAQAKWGTASLAGRTVGVEGTGKVGYQLIKLLLADGASVVATDVNAAALDRVARDFPEVKIASSVIGQELDVYAPCAMGATLTDESVAAITAQVICGAANNQLAHPAVEHDLGERGITWVPDYVANGGGLIQVAGERLGTSADDVRAQVEKIFATVVQILDVAKRDGILAGAAADAVAEARIAAAR</sequence>